<keyword id="KW-0002">3D-structure</keyword>
<keyword id="KW-0119">Carbohydrate metabolism</keyword>
<keyword id="KW-0963">Cytoplasm</keyword>
<keyword id="KW-0413">Isomerase</keyword>
<keyword id="KW-0479">Metal-binding</keyword>
<keyword id="KW-1185">Reference proteome</keyword>
<keyword id="KW-0862">Zinc</keyword>
<evidence type="ECO:0000255" key="1">
    <source>
        <dbReference type="HAMAP-Rule" id="MF_00067"/>
    </source>
</evidence>
<evidence type="ECO:0007829" key="2">
    <source>
        <dbReference type="PDB" id="5I01"/>
    </source>
</evidence>
<comment type="function">
    <text evidence="1">Catalyzes the isomerization of sedoheptulose 7-phosphate in D-glycero-D-manno-heptose 7-phosphate.</text>
</comment>
<comment type="catalytic activity">
    <reaction evidence="1">
        <text>2 D-sedoheptulose 7-phosphate = D-glycero-alpha-D-manno-heptose 7-phosphate + D-glycero-beta-D-manno-heptose 7-phosphate</text>
        <dbReference type="Rhea" id="RHEA:27489"/>
        <dbReference type="ChEBI" id="CHEBI:57483"/>
        <dbReference type="ChEBI" id="CHEBI:60203"/>
        <dbReference type="ChEBI" id="CHEBI:60204"/>
        <dbReference type="EC" id="5.3.1.28"/>
    </reaction>
</comment>
<comment type="cofactor">
    <cofactor evidence="1">
        <name>Zn(2+)</name>
        <dbReference type="ChEBI" id="CHEBI:29105"/>
    </cofactor>
    <text evidence="1">Binds 1 zinc ion per subunit.</text>
</comment>
<comment type="pathway">
    <text evidence="1">Carbohydrate biosynthesis; D-glycero-D-manno-heptose 7-phosphate biosynthesis; D-glycero-alpha-D-manno-heptose 7-phosphate and D-glycero-beta-D-manno-heptose 7-phosphate from sedoheptulose 7-phosphate: step 1/1.</text>
</comment>
<comment type="subunit">
    <text evidence="1">Homotetramer.</text>
</comment>
<comment type="subcellular location">
    <subcellularLocation>
        <location evidence="1">Cytoplasm</location>
    </subcellularLocation>
</comment>
<comment type="miscellaneous">
    <text evidence="1">The reaction produces a racemic mixture of D-glycero-alpha-D-manno-heptose 7-phosphate and D-glycero-beta-D-manno-heptose 7-phosphate.</text>
</comment>
<comment type="similarity">
    <text evidence="1">Belongs to the SIS family. GmhA subfamily.</text>
</comment>
<reference key="1">
    <citation type="submission" date="2003-03" db="EMBL/GenBank/DDBJ databases">
        <title>The complete genome sequence of Neisseria gonorrhoeae.</title>
        <authorList>
            <person name="Lewis L.A."/>
            <person name="Gillaspy A.F."/>
            <person name="McLaughlin R.E."/>
            <person name="Gipson M."/>
            <person name="Ducey T.F."/>
            <person name="Ownbey T."/>
            <person name="Hartman K."/>
            <person name="Nydick C."/>
            <person name="Carson M.B."/>
            <person name="Vaughn J."/>
            <person name="Thomson C."/>
            <person name="Song L."/>
            <person name="Lin S."/>
            <person name="Yuan X."/>
            <person name="Najar F."/>
            <person name="Zhan M."/>
            <person name="Ren Q."/>
            <person name="Zhu H."/>
            <person name="Qi S."/>
            <person name="Kenton S.M."/>
            <person name="Lai H."/>
            <person name="White J.D."/>
            <person name="Clifton S."/>
            <person name="Roe B.A."/>
            <person name="Dyer D.W."/>
        </authorList>
    </citation>
    <scope>NUCLEOTIDE SEQUENCE [LARGE SCALE GENOMIC DNA]</scope>
    <source>
        <strain>ATCC 700825 / FA 1090</strain>
    </source>
</reference>
<name>GMHA_NEIG1</name>
<protein>
    <recommendedName>
        <fullName evidence="1">Phosphoheptose isomerase</fullName>
        <ecNumber evidence="1">5.3.1.28</ecNumber>
    </recommendedName>
    <alternativeName>
        <fullName evidence="1">Sedoheptulose 7-phosphate isomerase</fullName>
    </alternativeName>
</protein>
<organism>
    <name type="scientific">Neisseria gonorrhoeae (strain ATCC 700825 / FA 1090)</name>
    <dbReference type="NCBI Taxonomy" id="242231"/>
    <lineage>
        <taxon>Bacteria</taxon>
        <taxon>Pseudomonadati</taxon>
        <taxon>Pseudomonadota</taxon>
        <taxon>Betaproteobacteria</taxon>
        <taxon>Neisseriales</taxon>
        <taxon>Neisseriaceae</taxon>
        <taxon>Neisseria</taxon>
    </lineage>
</organism>
<sequence>MTTLQERVAAHFAESIRAKQEAEKILVEPTVQAAELMLQCLMNDGKILACGNGGSAADAQHFAAEMTGRFEKERMELAAVALTTDTSALTAIGNDYGFDHVFSKQVRALGRAGDVLVGISTSGNSANVIEAVKAAHERDMHVIALTGRDGGKIAAMLKDTDVLLNVPHPRTARIQENHILLIHAMCDCIDSVLLEGM</sequence>
<accession>Q5F5E3</accession>
<proteinExistence type="evidence at protein level"/>
<feature type="chain" id="PRO_1000009082" description="Phosphoheptose isomerase">
    <location>
        <begin position="1"/>
        <end position="197"/>
    </location>
</feature>
<feature type="domain" description="SIS" evidence="1">
    <location>
        <begin position="37"/>
        <end position="197"/>
    </location>
</feature>
<feature type="binding site" evidence="1">
    <location>
        <begin position="52"/>
        <end position="54"/>
    </location>
    <ligand>
        <name>substrate</name>
    </ligand>
</feature>
<feature type="binding site" evidence="1">
    <location>
        <position position="61"/>
    </location>
    <ligand>
        <name>Zn(2+)</name>
        <dbReference type="ChEBI" id="CHEBI:29105"/>
    </ligand>
</feature>
<feature type="binding site" evidence="1">
    <location>
        <position position="65"/>
    </location>
    <ligand>
        <name>substrate</name>
    </ligand>
</feature>
<feature type="binding site" evidence="1">
    <location>
        <position position="65"/>
    </location>
    <ligand>
        <name>Zn(2+)</name>
        <dbReference type="ChEBI" id="CHEBI:29105"/>
    </ligand>
</feature>
<feature type="binding site" evidence="1">
    <location>
        <begin position="94"/>
        <end position="95"/>
    </location>
    <ligand>
        <name>substrate</name>
    </ligand>
</feature>
<feature type="binding site" evidence="1">
    <location>
        <begin position="120"/>
        <end position="122"/>
    </location>
    <ligand>
        <name>substrate</name>
    </ligand>
</feature>
<feature type="binding site" evidence="1">
    <location>
        <position position="125"/>
    </location>
    <ligand>
        <name>substrate</name>
    </ligand>
</feature>
<feature type="binding site" evidence="1">
    <location>
        <position position="175"/>
    </location>
    <ligand>
        <name>substrate</name>
    </ligand>
</feature>
<feature type="binding site" evidence="1">
    <location>
        <position position="175"/>
    </location>
    <ligand>
        <name>Zn(2+)</name>
        <dbReference type="ChEBI" id="CHEBI:29105"/>
    </ligand>
</feature>
<feature type="binding site" evidence="1">
    <location>
        <position position="183"/>
    </location>
    <ligand>
        <name>Zn(2+)</name>
        <dbReference type="ChEBI" id="CHEBI:29105"/>
    </ligand>
</feature>
<feature type="helix" evidence="2">
    <location>
        <begin position="4"/>
        <end position="25"/>
    </location>
</feature>
<feature type="helix" evidence="2">
    <location>
        <begin position="27"/>
        <end position="42"/>
    </location>
</feature>
<feature type="strand" evidence="2">
    <location>
        <begin position="47"/>
        <end position="50"/>
    </location>
</feature>
<feature type="helix" evidence="2">
    <location>
        <begin position="54"/>
        <end position="67"/>
    </location>
</feature>
<feature type="strand" evidence="2">
    <location>
        <begin position="79"/>
        <end position="81"/>
    </location>
</feature>
<feature type="helix" evidence="2">
    <location>
        <begin position="86"/>
        <end position="95"/>
    </location>
</feature>
<feature type="helix" evidence="2">
    <location>
        <begin position="98"/>
        <end position="100"/>
    </location>
</feature>
<feature type="helix" evidence="2">
    <location>
        <begin position="103"/>
        <end position="109"/>
    </location>
</feature>
<feature type="strand" evidence="2">
    <location>
        <begin position="115"/>
        <end position="123"/>
    </location>
</feature>
<feature type="helix" evidence="2">
    <location>
        <begin position="126"/>
        <end position="137"/>
    </location>
</feature>
<feature type="strand" evidence="2">
    <location>
        <begin position="141"/>
        <end position="147"/>
    </location>
</feature>
<feature type="helix" evidence="2">
    <location>
        <begin position="151"/>
        <end position="156"/>
    </location>
</feature>
<feature type="strand" evidence="2">
    <location>
        <begin position="161"/>
        <end position="166"/>
    </location>
</feature>
<feature type="helix" evidence="2">
    <location>
        <begin position="171"/>
        <end position="191"/>
    </location>
</feature>
<gene>
    <name evidence="1" type="primary">gmhA</name>
    <name type="ordered locus">NGO_1986</name>
</gene>
<dbReference type="EC" id="5.3.1.28" evidence="1"/>
<dbReference type="EMBL" id="AE004969">
    <property type="protein sequence ID" value="AAW90594.1"/>
    <property type="molecule type" value="Genomic_DNA"/>
</dbReference>
<dbReference type="RefSeq" id="WP_003692028.1">
    <property type="nucleotide sequence ID" value="NC_002946.2"/>
</dbReference>
<dbReference type="RefSeq" id="YP_209006.1">
    <property type="nucleotide sequence ID" value="NC_002946.2"/>
</dbReference>
<dbReference type="PDB" id="5I01">
    <property type="method" value="X-ray"/>
    <property type="resolution" value="2.37 A"/>
    <property type="chains" value="A/B/C/D=1-197"/>
</dbReference>
<dbReference type="PDBsum" id="5I01"/>
<dbReference type="SMR" id="Q5F5E3"/>
<dbReference type="STRING" id="242231.NGO_1986"/>
<dbReference type="KEGG" id="ngo:NGO_1986"/>
<dbReference type="PATRIC" id="fig|242231.10.peg.2396"/>
<dbReference type="HOGENOM" id="CLU_080999_4_0_4"/>
<dbReference type="UniPathway" id="UPA00041">
    <property type="reaction ID" value="UER00436"/>
</dbReference>
<dbReference type="Proteomes" id="UP000000535">
    <property type="component" value="Chromosome"/>
</dbReference>
<dbReference type="GO" id="GO:0005737">
    <property type="term" value="C:cytoplasm"/>
    <property type="evidence" value="ECO:0007669"/>
    <property type="project" value="UniProtKB-SubCell"/>
</dbReference>
<dbReference type="GO" id="GO:0097367">
    <property type="term" value="F:carbohydrate derivative binding"/>
    <property type="evidence" value="ECO:0007669"/>
    <property type="project" value="InterPro"/>
</dbReference>
<dbReference type="GO" id="GO:0008968">
    <property type="term" value="F:D-sedoheptulose 7-phosphate isomerase activity"/>
    <property type="evidence" value="ECO:0007669"/>
    <property type="project" value="UniProtKB-UniRule"/>
</dbReference>
<dbReference type="GO" id="GO:0008270">
    <property type="term" value="F:zinc ion binding"/>
    <property type="evidence" value="ECO:0007669"/>
    <property type="project" value="UniProtKB-UniRule"/>
</dbReference>
<dbReference type="GO" id="GO:0005975">
    <property type="term" value="P:carbohydrate metabolic process"/>
    <property type="evidence" value="ECO:0007669"/>
    <property type="project" value="UniProtKB-UniRule"/>
</dbReference>
<dbReference type="GO" id="GO:2001061">
    <property type="term" value="P:D-glycero-D-manno-heptose 7-phosphate biosynthetic process"/>
    <property type="evidence" value="ECO:0007669"/>
    <property type="project" value="UniProtKB-UniPathway"/>
</dbReference>
<dbReference type="CDD" id="cd05006">
    <property type="entry name" value="SIS_GmhA"/>
    <property type="match status" value="1"/>
</dbReference>
<dbReference type="Gene3D" id="3.40.50.10490">
    <property type="entry name" value="Glucose-6-phosphate isomerase like protein, domain 1"/>
    <property type="match status" value="1"/>
</dbReference>
<dbReference type="HAMAP" id="MF_00067">
    <property type="entry name" value="GmhA"/>
    <property type="match status" value="1"/>
</dbReference>
<dbReference type="InterPro" id="IPR035461">
    <property type="entry name" value="GmhA/DiaA"/>
</dbReference>
<dbReference type="InterPro" id="IPR004515">
    <property type="entry name" value="Phosphoheptose_Isoase"/>
</dbReference>
<dbReference type="InterPro" id="IPR001347">
    <property type="entry name" value="SIS_dom"/>
</dbReference>
<dbReference type="InterPro" id="IPR046348">
    <property type="entry name" value="SIS_dom_sf"/>
</dbReference>
<dbReference type="InterPro" id="IPR050099">
    <property type="entry name" value="SIS_GmhA/DiaA_subfam"/>
</dbReference>
<dbReference type="NCBIfam" id="TIGR00441">
    <property type="entry name" value="gmhA"/>
    <property type="match status" value="1"/>
</dbReference>
<dbReference type="NCBIfam" id="NF010546">
    <property type="entry name" value="PRK13936.1"/>
    <property type="match status" value="1"/>
</dbReference>
<dbReference type="PANTHER" id="PTHR30390:SF6">
    <property type="entry name" value="DNAA INITIATOR-ASSOCIATING PROTEIN DIAA"/>
    <property type="match status" value="1"/>
</dbReference>
<dbReference type="PANTHER" id="PTHR30390">
    <property type="entry name" value="SEDOHEPTULOSE 7-PHOSPHATE ISOMERASE / DNAA INITIATOR-ASSOCIATING FACTOR FOR REPLICATION INITIATION"/>
    <property type="match status" value="1"/>
</dbReference>
<dbReference type="Pfam" id="PF13580">
    <property type="entry name" value="SIS_2"/>
    <property type="match status" value="1"/>
</dbReference>
<dbReference type="SUPFAM" id="SSF53697">
    <property type="entry name" value="SIS domain"/>
    <property type="match status" value="1"/>
</dbReference>
<dbReference type="PROSITE" id="PS51464">
    <property type="entry name" value="SIS"/>
    <property type="match status" value="1"/>
</dbReference>